<comment type="function">
    <text evidence="1">Transfers a succinyl group from succinyl-CoA to L-homoserine, forming succinyl-L-homoserine.</text>
</comment>
<comment type="catalytic activity">
    <reaction evidence="1">
        <text>L-homoserine + succinyl-CoA = O-succinyl-L-homoserine + CoA</text>
        <dbReference type="Rhea" id="RHEA:22008"/>
        <dbReference type="ChEBI" id="CHEBI:57287"/>
        <dbReference type="ChEBI" id="CHEBI:57292"/>
        <dbReference type="ChEBI" id="CHEBI:57476"/>
        <dbReference type="ChEBI" id="CHEBI:57661"/>
        <dbReference type="EC" id="2.3.1.46"/>
    </reaction>
</comment>
<comment type="pathway">
    <text evidence="1">Amino-acid biosynthesis; L-methionine biosynthesis via de novo pathway; O-succinyl-L-homoserine from L-homoserine: step 1/1.</text>
</comment>
<comment type="subunit">
    <text evidence="1">Homodimer.</text>
</comment>
<comment type="subcellular location">
    <subcellularLocation>
        <location evidence="1">Cytoplasm</location>
    </subcellularLocation>
</comment>
<comment type="similarity">
    <text evidence="1">Belongs to the MetA family.</text>
</comment>
<dbReference type="EC" id="2.3.1.46" evidence="1"/>
<dbReference type="EMBL" id="CP000857">
    <property type="protein sequence ID" value="ACN48305.1"/>
    <property type="molecule type" value="Genomic_DNA"/>
</dbReference>
<dbReference type="SMR" id="C0Q486"/>
<dbReference type="KEGG" id="sei:SPC_4242"/>
<dbReference type="HOGENOM" id="CLU_057851_0_1_6"/>
<dbReference type="UniPathway" id="UPA00051">
    <property type="reaction ID" value="UER00075"/>
</dbReference>
<dbReference type="Proteomes" id="UP000001599">
    <property type="component" value="Chromosome"/>
</dbReference>
<dbReference type="GO" id="GO:0005737">
    <property type="term" value="C:cytoplasm"/>
    <property type="evidence" value="ECO:0007669"/>
    <property type="project" value="UniProtKB-SubCell"/>
</dbReference>
<dbReference type="GO" id="GO:0004414">
    <property type="term" value="F:homoserine O-acetyltransferase activity"/>
    <property type="evidence" value="ECO:0007669"/>
    <property type="project" value="UniProtKB-UniRule"/>
</dbReference>
<dbReference type="GO" id="GO:0008899">
    <property type="term" value="F:homoserine O-succinyltransferase activity"/>
    <property type="evidence" value="ECO:0007669"/>
    <property type="project" value="UniProtKB-EC"/>
</dbReference>
<dbReference type="GO" id="GO:0019281">
    <property type="term" value="P:L-methionine biosynthetic process from homoserine via O-succinyl-L-homoserine and cystathionine"/>
    <property type="evidence" value="ECO:0007669"/>
    <property type="project" value="InterPro"/>
</dbReference>
<dbReference type="CDD" id="cd03131">
    <property type="entry name" value="GATase1_HTS"/>
    <property type="match status" value="1"/>
</dbReference>
<dbReference type="FunFam" id="3.40.50.880:FF:000004">
    <property type="entry name" value="Homoserine O-succinyltransferase"/>
    <property type="match status" value="1"/>
</dbReference>
<dbReference type="Gene3D" id="3.40.50.880">
    <property type="match status" value="1"/>
</dbReference>
<dbReference type="HAMAP" id="MF_00295">
    <property type="entry name" value="MetA_acyltransf"/>
    <property type="match status" value="1"/>
</dbReference>
<dbReference type="InterPro" id="IPR029062">
    <property type="entry name" value="Class_I_gatase-like"/>
</dbReference>
<dbReference type="InterPro" id="IPR005697">
    <property type="entry name" value="HST_MetA"/>
</dbReference>
<dbReference type="InterPro" id="IPR033752">
    <property type="entry name" value="MetA_family"/>
</dbReference>
<dbReference type="NCBIfam" id="TIGR01001">
    <property type="entry name" value="metA"/>
    <property type="match status" value="1"/>
</dbReference>
<dbReference type="PANTHER" id="PTHR20919">
    <property type="entry name" value="HOMOSERINE O-SUCCINYLTRANSFERASE"/>
    <property type="match status" value="1"/>
</dbReference>
<dbReference type="PANTHER" id="PTHR20919:SF0">
    <property type="entry name" value="HOMOSERINE O-SUCCINYLTRANSFERASE"/>
    <property type="match status" value="1"/>
</dbReference>
<dbReference type="Pfam" id="PF04204">
    <property type="entry name" value="HTS"/>
    <property type="match status" value="1"/>
</dbReference>
<dbReference type="PIRSF" id="PIRSF000450">
    <property type="entry name" value="H_ser_succinyltr"/>
    <property type="match status" value="1"/>
</dbReference>
<dbReference type="SUPFAM" id="SSF52317">
    <property type="entry name" value="Class I glutamine amidotransferase-like"/>
    <property type="match status" value="1"/>
</dbReference>
<protein>
    <recommendedName>
        <fullName evidence="1">Homoserine O-succinyltransferase</fullName>
        <shortName evidence="1">HST</shortName>
        <ecNumber evidence="1">2.3.1.46</ecNumber>
    </recommendedName>
    <alternativeName>
        <fullName evidence="1">Homoserine transsuccinylase</fullName>
        <shortName evidence="1">HTS</shortName>
    </alternativeName>
</protein>
<keyword id="KW-0012">Acyltransferase</keyword>
<keyword id="KW-0028">Amino-acid biosynthesis</keyword>
<keyword id="KW-0963">Cytoplasm</keyword>
<keyword id="KW-0486">Methionine biosynthesis</keyword>
<keyword id="KW-0808">Transferase</keyword>
<name>METAS_SALPC</name>
<evidence type="ECO:0000255" key="1">
    <source>
        <dbReference type="HAMAP-Rule" id="MF_00295"/>
    </source>
</evidence>
<gene>
    <name evidence="1" type="primary">metAS</name>
    <name type="ordered locus">SPC_4242</name>
</gene>
<organism>
    <name type="scientific">Salmonella paratyphi C (strain RKS4594)</name>
    <dbReference type="NCBI Taxonomy" id="476213"/>
    <lineage>
        <taxon>Bacteria</taxon>
        <taxon>Pseudomonadati</taxon>
        <taxon>Pseudomonadota</taxon>
        <taxon>Gammaproteobacteria</taxon>
        <taxon>Enterobacterales</taxon>
        <taxon>Enterobacteriaceae</taxon>
        <taxon>Salmonella</taxon>
    </lineage>
</organism>
<proteinExistence type="inferred from homology"/>
<sequence>MPIRVLDELPAVNFLREENVFVMTTSRASGQEIRPLKVLILNLMPKKIETENQFLRLLSNSPLQVDIQLLRIDARESRNTPAEHLNNFYCNFDDICDQNFDGLIVTGAPLGLVEFNDVAYWPQIRQVLEWAKDHVTSTLFVCWAVQAALNILYGIPKQTRTDKLSGVYEHHILHPHALLTRGFDDSFLAPHSRYADFPAALIRDYTDLEILAETEEGDAYLFASKDKRIAFVTGHPEYDAHTLAGEYFRDVEAGLNPEVPYNYFPKNDPQNIPRATWRSHGNLLFTNWLNYYVYQITPYDLRHMNPTLD</sequence>
<accession>C0Q486</accession>
<reference key="1">
    <citation type="journal article" date="2009" name="PLoS ONE">
        <title>Salmonella paratyphi C: genetic divergence from Salmonella choleraesuis and pathogenic convergence with Salmonella typhi.</title>
        <authorList>
            <person name="Liu W.-Q."/>
            <person name="Feng Y."/>
            <person name="Wang Y."/>
            <person name="Zou Q.-H."/>
            <person name="Chen F."/>
            <person name="Guo J.-T."/>
            <person name="Peng Y.-H."/>
            <person name="Jin Y."/>
            <person name="Li Y.-G."/>
            <person name="Hu S.-N."/>
            <person name="Johnston R.N."/>
            <person name="Liu G.-R."/>
            <person name="Liu S.-L."/>
        </authorList>
    </citation>
    <scope>NUCLEOTIDE SEQUENCE [LARGE SCALE GENOMIC DNA]</scope>
    <source>
        <strain>RKS4594</strain>
    </source>
</reference>
<feature type="chain" id="PRO_1000191189" description="Homoserine O-succinyltransferase">
    <location>
        <begin position="1"/>
        <end position="309"/>
    </location>
</feature>
<feature type="active site" description="Acyl-thioester intermediate" evidence="1">
    <location>
        <position position="142"/>
    </location>
</feature>
<feature type="active site" description="Proton acceptor" evidence="1">
    <location>
        <position position="235"/>
    </location>
</feature>
<feature type="active site" evidence="1">
    <location>
        <position position="237"/>
    </location>
</feature>
<feature type="binding site" evidence="1">
    <location>
        <position position="163"/>
    </location>
    <ligand>
        <name>substrate</name>
    </ligand>
</feature>
<feature type="binding site" evidence="1">
    <location>
        <position position="192"/>
    </location>
    <ligand>
        <name>substrate</name>
    </ligand>
</feature>
<feature type="binding site" evidence="1">
    <location>
        <position position="249"/>
    </location>
    <ligand>
        <name>substrate</name>
    </ligand>
</feature>
<feature type="site" description="Important for acyl-CoA specificity" evidence="1">
    <location>
        <position position="111"/>
    </location>
</feature>
<feature type="site" description="Important for substrate specificity" evidence="1">
    <location>
        <position position="192"/>
    </location>
</feature>